<comment type="function">
    <text evidence="1">Component of the cytochrome c oxidase, the last enzyme in the mitochondrial electron transport chain which drives oxidative phosphorylation. The respiratory chain contains 3 multisubunit complexes succinate dehydrogenase (complex II, CII), ubiquinol-cytochrome c oxidoreductase (cytochrome b-c1 complex, complex III, CIII) and cytochrome c oxidase (complex IV, CIV), that cooperate to transfer electrons derived from NADH and succinate to molecular oxygen, creating an electrochemical gradient over the inner membrane that drives transmembrane transport and the ATP synthase. Cytochrome c oxidase is the component of the respiratory chain that catalyzes the reduction of oxygen to water. Electrons originating from reduced cytochrome c in the intermembrane space (IMS) are transferred via the dinuclear copper A center (CU(A)) of subunit 2 and heme A of subunit 1 to the active site in subunit 1, a binuclear center (BNC) formed by heme A3 and copper B (CU(B)). The BNC reduces molecular oxygen to 2 water molecules using 4 electrons from cytochrome c in the IMS and 4 protons from the mitochondrial matrix.</text>
</comment>
<comment type="pathway">
    <text evidence="1">Energy metabolism; oxidative phosphorylation.</text>
</comment>
<comment type="subunit">
    <text evidence="1">Component of the cytochrome c oxidase (complex IV, CIV), a multisubunit enzyme composed of a catalytic core of 3 subunits and several supernumerary subunits. The complex exists as a monomer or a dimer and forms supercomplexes (SCs) in the inner mitochondrial membrane with ubiquinol-cytochrome c oxidoreductase (cytochrome b-c1 complex, complex III, CIII).</text>
</comment>
<comment type="subcellular location">
    <subcellularLocation>
        <location evidence="1">Mitochondrion inner membrane</location>
        <topology evidence="1">Peripheral membrane protein</topology>
        <orientation evidence="1">Matrix side</orientation>
    </subcellularLocation>
</comment>
<comment type="similarity">
    <text evidence="3">Belongs to the cytochrome c oxidase subunit 5A family.</text>
</comment>
<dbReference type="EMBL" id="CU329670">
    <property type="protein sequence ID" value="CAB61471.1"/>
    <property type="molecule type" value="Genomic_DNA"/>
</dbReference>
<dbReference type="PIR" id="T50140">
    <property type="entry name" value="T50140"/>
</dbReference>
<dbReference type="RefSeq" id="NP_593931.1">
    <property type="nucleotide sequence ID" value="NM_001019360.2"/>
</dbReference>
<dbReference type="PDB" id="8C8Q">
    <property type="method" value="EM"/>
    <property type="resolution" value="3.36 A"/>
    <property type="chains" value="F=1-140"/>
</dbReference>
<dbReference type="PDB" id="8Q1B">
    <property type="method" value="EM"/>
    <property type="resolution" value="3.40 A"/>
    <property type="chains" value="f=1-140"/>
</dbReference>
<dbReference type="PDBsum" id="8C8Q"/>
<dbReference type="PDBsum" id="8Q1B"/>
<dbReference type="EMDB" id="EMD-16491"/>
<dbReference type="EMDB" id="EMD-18062"/>
<dbReference type="SMR" id="Q9UTF6"/>
<dbReference type="BioGRID" id="278952">
    <property type="interactions" value="4"/>
</dbReference>
<dbReference type="ComplexPortal" id="CPX-9641">
    <property type="entry name" value="Mitochondrial respiratory chain complex IV"/>
</dbReference>
<dbReference type="FunCoup" id="Q9UTF6">
    <property type="interactions" value="178"/>
</dbReference>
<dbReference type="STRING" id="284812.Q9UTF6"/>
<dbReference type="iPTMnet" id="Q9UTF6"/>
<dbReference type="PaxDb" id="4896-SPAC1B2.04.1"/>
<dbReference type="EnsemblFungi" id="SPAC1B2.04.1">
    <property type="protein sequence ID" value="SPAC1B2.04.1:pep"/>
    <property type="gene ID" value="SPAC1B2.04"/>
</dbReference>
<dbReference type="GeneID" id="2542493"/>
<dbReference type="KEGG" id="spo:2542493"/>
<dbReference type="PomBase" id="SPAC1B2.04">
    <property type="gene designation" value="cox6"/>
</dbReference>
<dbReference type="VEuPathDB" id="FungiDB:SPAC1B2.04"/>
<dbReference type="eggNOG" id="KOG4077">
    <property type="taxonomic scope" value="Eukaryota"/>
</dbReference>
<dbReference type="HOGENOM" id="CLU_099086_0_1_1"/>
<dbReference type="InParanoid" id="Q9UTF6"/>
<dbReference type="OMA" id="CFAYDIV"/>
<dbReference type="PhylomeDB" id="Q9UTF6"/>
<dbReference type="Reactome" id="R-SPO-9837999">
    <property type="pathway name" value="Mitochondrial protein degradation"/>
</dbReference>
<dbReference type="UniPathway" id="UPA00705"/>
<dbReference type="PRO" id="PR:Q9UTF6"/>
<dbReference type="Proteomes" id="UP000002485">
    <property type="component" value="Chromosome I"/>
</dbReference>
<dbReference type="GO" id="GO:0005743">
    <property type="term" value="C:mitochondrial inner membrane"/>
    <property type="evidence" value="ECO:0000305"/>
    <property type="project" value="PomBase"/>
</dbReference>
<dbReference type="GO" id="GO:0005739">
    <property type="term" value="C:mitochondrion"/>
    <property type="evidence" value="ECO:0007005"/>
    <property type="project" value="PomBase"/>
</dbReference>
<dbReference type="GO" id="GO:0045277">
    <property type="term" value="C:respiratory chain complex IV"/>
    <property type="evidence" value="ECO:0000314"/>
    <property type="project" value="PomBase"/>
</dbReference>
<dbReference type="GO" id="GO:0046872">
    <property type="term" value="F:metal ion binding"/>
    <property type="evidence" value="ECO:0007669"/>
    <property type="project" value="UniProtKB-KW"/>
</dbReference>
<dbReference type="GO" id="GO:0006123">
    <property type="term" value="P:mitochondrial electron transport, cytochrome c to oxygen"/>
    <property type="evidence" value="ECO:0000318"/>
    <property type="project" value="GO_Central"/>
</dbReference>
<dbReference type="GO" id="GO:1902600">
    <property type="term" value="P:proton transmembrane transport"/>
    <property type="evidence" value="ECO:0007669"/>
    <property type="project" value="GOC"/>
</dbReference>
<dbReference type="CDD" id="cd00923">
    <property type="entry name" value="Cyt_c_Oxidase_Va"/>
    <property type="match status" value="1"/>
</dbReference>
<dbReference type="FunFam" id="1.25.40.40:FF:000001">
    <property type="entry name" value="Cytochrome c oxidase subunit VI"/>
    <property type="match status" value="1"/>
</dbReference>
<dbReference type="Gene3D" id="1.25.40.40">
    <property type="entry name" value="Cytochrome c oxidase, subunit Va/VI"/>
    <property type="match status" value="1"/>
</dbReference>
<dbReference type="InterPro" id="IPR003204">
    <property type="entry name" value="Cyt_c_oxidase_su5A/6"/>
</dbReference>
<dbReference type="InterPro" id="IPR036545">
    <property type="entry name" value="Cyt_c_oxidase_su5A/6_sf"/>
</dbReference>
<dbReference type="PANTHER" id="PTHR14200">
    <property type="entry name" value="CYTOCHROME C OXIDASE POLYPEPTIDE"/>
    <property type="match status" value="1"/>
</dbReference>
<dbReference type="PANTHER" id="PTHR14200:SF11">
    <property type="entry name" value="CYTOCHROME C OXIDASE SUBUNIT 5A, MITOCHONDRIAL"/>
    <property type="match status" value="1"/>
</dbReference>
<dbReference type="Pfam" id="PF02284">
    <property type="entry name" value="COX5A"/>
    <property type="match status" value="1"/>
</dbReference>
<dbReference type="SUPFAM" id="SSF48479">
    <property type="entry name" value="Cytochrome c oxidase subunit E"/>
    <property type="match status" value="1"/>
</dbReference>
<keyword id="KW-0002">3D-structure</keyword>
<keyword id="KW-0349">Heme</keyword>
<keyword id="KW-0408">Iron</keyword>
<keyword id="KW-0472">Membrane</keyword>
<keyword id="KW-0479">Metal-binding</keyword>
<keyword id="KW-0496">Mitochondrion</keyword>
<keyword id="KW-0999">Mitochondrion inner membrane</keyword>
<keyword id="KW-1185">Reference proteome</keyword>
<keyword id="KW-0809">Transit peptide</keyword>
<reference key="1">
    <citation type="journal article" date="2002" name="Nature">
        <title>The genome sequence of Schizosaccharomyces pombe.</title>
        <authorList>
            <person name="Wood V."/>
            <person name="Gwilliam R."/>
            <person name="Rajandream M.A."/>
            <person name="Lyne M.H."/>
            <person name="Lyne R."/>
            <person name="Stewart A."/>
            <person name="Sgouros J.G."/>
            <person name="Peat N."/>
            <person name="Hayles J."/>
            <person name="Baker S.G."/>
            <person name="Basham D."/>
            <person name="Bowman S."/>
            <person name="Brooks K."/>
            <person name="Brown D."/>
            <person name="Brown S."/>
            <person name="Chillingworth T."/>
            <person name="Churcher C.M."/>
            <person name="Collins M."/>
            <person name="Connor R."/>
            <person name="Cronin A."/>
            <person name="Davis P."/>
            <person name="Feltwell T."/>
            <person name="Fraser A."/>
            <person name="Gentles S."/>
            <person name="Goble A."/>
            <person name="Hamlin N."/>
            <person name="Harris D.E."/>
            <person name="Hidalgo J."/>
            <person name="Hodgson G."/>
            <person name="Holroyd S."/>
            <person name="Hornsby T."/>
            <person name="Howarth S."/>
            <person name="Huckle E.J."/>
            <person name="Hunt S."/>
            <person name="Jagels K."/>
            <person name="James K.D."/>
            <person name="Jones L."/>
            <person name="Jones M."/>
            <person name="Leather S."/>
            <person name="McDonald S."/>
            <person name="McLean J."/>
            <person name="Mooney P."/>
            <person name="Moule S."/>
            <person name="Mungall K.L."/>
            <person name="Murphy L.D."/>
            <person name="Niblett D."/>
            <person name="Odell C."/>
            <person name="Oliver K."/>
            <person name="O'Neil S."/>
            <person name="Pearson D."/>
            <person name="Quail M.A."/>
            <person name="Rabbinowitsch E."/>
            <person name="Rutherford K.M."/>
            <person name="Rutter S."/>
            <person name="Saunders D."/>
            <person name="Seeger K."/>
            <person name="Sharp S."/>
            <person name="Skelton J."/>
            <person name="Simmonds M.N."/>
            <person name="Squares R."/>
            <person name="Squares S."/>
            <person name="Stevens K."/>
            <person name="Taylor K."/>
            <person name="Taylor R.G."/>
            <person name="Tivey A."/>
            <person name="Walsh S.V."/>
            <person name="Warren T."/>
            <person name="Whitehead S."/>
            <person name="Woodward J.R."/>
            <person name="Volckaert G."/>
            <person name="Aert R."/>
            <person name="Robben J."/>
            <person name="Grymonprez B."/>
            <person name="Weltjens I."/>
            <person name="Vanstreels E."/>
            <person name="Rieger M."/>
            <person name="Schaefer M."/>
            <person name="Mueller-Auer S."/>
            <person name="Gabel C."/>
            <person name="Fuchs M."/>
            <person name="Duesterhoeft A."/>
            <person name="Fritzc C."/>
            <person name="Holzer E."/>
            <person name="Moestl D."/>
            <person name="Hilbert H."/>
            <person name="Borzym K."/>
            <person name="Langer I."/>
            <person name="Beck A."/>
            <person name="Lehrach H."/>
            <person name="Reinhardt R."/>
            <person name="Pohl T.M."/>
            <person name="Eger P."/>
            <person name="Zimmermann W."/>
            <person name="Wedler H."/>
            <person name="Wambutt R."/>
            <person name="Purnelle B."/>
            <person name="Goffeau A."/>
            <person name="Cadieu E."/>
            <person name="Dreano S."/>
            <person name="Gloux S."/>
            <person name="Lelaure V."/>
            <person name="Mottier S."/>
            <person name="Galibert F."/>
            <person name="Aves S.J."/>
            <person name="Xiang Z."/>
            <person name="Hunt C."/>
            <person name="Moore K."/>
            <person name="Hurst S.M."/>
            <person name="Lucas M."/>
            <person name="Rochet M."/>
            <person name="Gaillardin C."/>
            <person name="Tallada V.A."/>
            <person name="Garzon A."/>
            <person name="Thode G."/>
            <person name="Daga R.R."/>
            <person name="Cruzado L."/>
            <person name="Jimenez J."/>
            <person name="Sanchez M."/>
            <person name="del Rey F."/>
            <person name="Benito J."/>
            <person name="Dominguez A."/>
            <person name="Revuelta J.L."/>
            <person name="Moreno S."/>
            <person name="Armstrong J."/>
            <person name="Forsburg S.L."/>
            <person name="Cerutti L."/>
            <person name="Lowe T."/>
            <person name="McCombie W.R."/>
            <person name="Paulsen I."/>
            <person name="Potashkin J."/>
            <person name="Shpakovski G.V."/>
            <person name="Ussery D."/>
            <person name="Barrell B.G."/>
            <person name="Nurse P."/>
        </authorList>
    </citation>
    <scope>NUCLEOTIDE SEQUENCE [LARGE SCALE GENOMIC DNA]</scope>
    <source>
        <strain>972 / ATCC 24843</strain>
    </source>
</reference>
<organism>
    <name type="scientific">Schizosaccharomyces pombe (strain 972 / ATCC 24843)</name>
    <name type="common">Fission yeast</name>
    <dbReference type="NCBI Taxonomy" id="284812"/>
    <lineage>
        <taxon>Eukaryota</taxon>
        <taxon>Fungi</taxon>
        <taxon>Dikarya</taxon>
        <taxon>Ascomycota</taxon>
        <taxon>Taphrinomycotina</taxon>
        <taxon>Schizosaccharomycetes</taxon>
        <taxon>Schizosaccharomycetales</taxon>
        <taxon>Schizosaccharomycetaceae</taxon>
        <taxon>Schizosaccharomyces</taxon>
    </lineage>
</organism>
<protein>
    <recommendedName>
        <fullName>Cytochrome c oxidase subunit 6, mitochondrial</fullName>
    </recommendedName>
    <alternativeName>
        <fullName>Cytochrome c oxidase polypeptide VI</fullName>
    </alternativeName>
</protein>
<accession>Q9UTF6</accession>
<name>COX6_SCHPO</name>
<gene>
    <name type="primary">cox6</name>
    <name type="ORF">SPAC1B2.04</name>
</gene>
<sequence>MKAVQRIFQTGRFSVAAGPSVRFQAGFLAANRQVRFSSNHGVSLEEINTKYNDFFSNVQDQFELQRGLNNCFAYDIVPSSDVIEQALRAARRVNDFPTAVRIFEGIKVKLPTKEQYQAYVKELKPVCNELGIVLKEDLFK</sequence>
<evidence type="ECO:0000250" key="1">
    <source>
        <dbReference type="UniProtKB" id="P00427"/>
    </source>
</evidence>
<evidence type="ECO:0000255" key="2"/>
<evidence type="ECO:0000305" key="3"/>
<evidence type="ECO:0007829" key="4">
    <source>
        <dbReference type="PDB" id="8C8Q"/>
    </source>
</evidence>
<feature type="transit peptide" description="Mitochondrion" evidence="2">
    <location>
        <begin position="1"/>
        <end status="unknown"/>
    </location>
</feature>
<feature type="chain" id="PRO_0000006107" description="Cytochrome c oxidase subunit 6, mitochondrial">
    <location>
        <begin status="unknown"/>
        <end position="140"/>
    </location>
</feature>
<feature type="helix" evidence="4">
    <location>
        <begin position="45"/>
        <end position="56"/>
    </location>
</feature>
<feature type="helix" evidence="4">
    <location>
        <begin position="61"/>
        <end position="71"/>
    </location>
</feature>
<feature type="helix" evidence="4">
    <location>
        <begin position="80"/>
        <end position="93"/>
    </location>
</feature>
<feature type="helix" evidence="4">
    <location>
        <begin position="96"/>
        <end position="109"/>
    </location>
</feature>
<feature type="helix" evidence="4">
    <location>
        <begin position="113"/>
        <end position="122"/>
    </location>
</feature>
<feature type="helix" evidence="4">
    <location>
        <begin position="124"/>
        <end position="130"/>
    </location>
</feature>
<feature type="helix" evidence="4">
    <location>
        <begin position="135"/>
        <end position="138"/>
    </location>
</feature>
<proteinExistence type="evidence at protein level"/>